<sequence length="413" mass="45646">MVATAVTSAFFPVTSSPDSSDSKNKKLGSIKSKPSVSSGSLQVKANAQAPPKINGTVASTTPVEGSKNDDGASSPPPRTFINQLPDWSMLLAAITTIFLAAEKQWMMLDWKPRRPDMVIDPFGIGKIVQDGLVFSQNFSIRSYEIGADQTASIETLMNHLQETAINHCRSAGLLGEGFGATPEMCKKNLIWVVTRMQVVVDRYPTWGDVVQVDTWVSASGKNGMRRDWLVSNSETGEILTRATSVWVMMNKLTRRLSKIPEEVRGEIEPFFMNSDPVLAEDSQKLVKLDDSTAEHVCKGLTPKWSDLDVNQHVNNVKYIGWILESAPLPILESHELSALTLEYRRECGRDSVLQSLTTVSDSNTENAVNVGEFNCQHLLRLDDGAEIVRGRTRWRPKHAKSSANMDQITAKRA</sequence>
<comment type="function">
    <text>Plays an essential role in chain termination during de novo fatty acid synthesis. High thioesterase activity for palmitoyl-ACP versus other acyl-ACPs.</text>
</comment>
<comment type="catalytic activity">
    <reaction>
        <text>hexadecanoyl-[ACP] + H2O = hexadecanoate + holo-[ACP] + H(+)</text>
        <dbReference type="Rhea" id="RHEA:41932"/>
        <dbReference type="Rhea" id="RHEA-COMP:9652"/>
        <dbReference type="Rhea" id="RHEA-COMP:9685"/>
        <dbReference type="ChEBI" id="CHEBI:7896"/>
        <dbReference type="ChEBI" id="CHEBI:15377"/>
        <dbReference type="ChEBI" id="CHEBI:15378"/>
        <dbReference type="ChEBI" id="CHEBI:64479"/>
        <dbReference type="ChEBI" id="CHEBI:78483"/>
    </reaction>
</comment>
<comment type="subcellular location">
    <subcellularLocation>
        <location>Plastid</location>
        <location>Chloroplast</location>
    </subcellularLocation>
</comment>
<comment type="similarity">
    <text evidence="3">Belongs to the acyl-ACP thioesterase family.</text>
</comment>
<keyword id="KW-0150">Chloroplast</keyword>
<keyword id="KW-0275">Fatty acid biosynthesis</keyword>
<keyword id="KW-0276">Fatty acid metabolism</keyword>
<keyword id="KW-0378">Hydrolase</keyword>
<keyword id="KW-0444">Lipid biosynthesis</keyword>
<keyword id="KW-0443">Lipid metabolism</keyword>
<keyword id="KW-0934">Plastid</keyword>
<keyword id="KW-1185">Reference proteome</keyword>
<keyword id="KW-0809">Transit peptide</keyword>
<name>FATB_GOSHI</name>
<dbReference type="EC" id="3.1.2.-"/>
<dbReference type="EMBL" id="AF076535">
    <property type="protein sequence ID" value="AAF02215.1"/>
    <property type="molecule type" value="Genomic_DNA"/>
</dbReference>
<dbReference type="EMBL" id="AF034266">
    <property type="protein sequence ID" value="AAD01982.1"/>
    <property type="molecule type" value="mRNA"/>
</dbReference>
<dbReference type="SMR" id="Q9SQI3"/>
<dbReference type="STRING" id="3635.Q9SQI3"/>
<dbReference type="PaxDb" id="3635-Q9SQI3"/>
<dbReference type="OMA" id="FQCEHLL"/>
<dbReference type="BRENDA" id="3.1.2.14">
    <property type="organism ID" value="2499"/>
</dbReference>
<dbReference type="Proteomes" id="UP000189702">
    <property type="component" value="Unplaced"/>
</dbReference>
<dbReference type="GO" id="GO:0009507">
    <property type="term" value="C:chloroplast"/>
    <property type="evidence" value="ECO:0007669"/>
    <property type="project" value="UniProtKB-SubCell"/>
</dbReference>
<dbReference type="GO" id="GO:0000036">
    <property type="term" value="F:acyl carrier activity"/>
    <property type="evidence" value="ECO:0000318"/>
    <property type="project" value="GO_Central"/>
</dbReference>
<dbReference type="GO" id="GO:0016297">
    <property type="term" value="F:fatty acyl-[ACP] hydrolase activity"/>
    <property type="evidence" value="ECO:0000318"/>
    <property type="project" value="GO_Central"/>
</dbReference>
<dbReference type="CDD" id="cd00586">
    <property type="entry name" value="4HBT"/>
    <property type="match status" value="1"/>
</dbReference>
<dbReference type="FunFam" id="3.10.129.10:FF:000014">
    <property type="entry name" value="Acyl-[acyl-carrier-protein] hydrolase"/>
    <property type="match status" value="1"/>
</dbReference>
<dbReference type="Gene3D" id="3.10.129.10">
    <property type="entry name" value="Hotdog Thioesterase"/>
    <property type="match status" value="1"/>
</dbReference>
<dbReference type="InterPro" id="IPR021113">
    <property type="entry name" value="Acyl-ACP-thioesterase_N"/>
</dbReference>
<dbReference type="InterPro" id="IPR049427">
    <property type="entry name" value="Acyl-ACP_TE_C"/>
</dbReference>
<dbReference type="InterPro" id="IPR002864">
    <property type="entry name" value="Acyl-ACP_thioesterase_NHD"/>
</dbReference>
<dbReference type="InterPro" id="IPR045023">
    <property type="entry name" value="FATA/B"/>
</dbReference>
<dbReference type="InterPro" id="IPR029069">
    <property type="entry name" value="HotDog_dom_sf"/>
</dbReference>
<dbReference type="PANTHER" id="PTHR31727">
    <property type="entry name" value="OLEOYL-ACYL CARRIER PROTEIN THIOESTERASE 1, CHLOROPLASTIC"/>
    <property type="match status" value="1"/>
</dbReference>
<dbReference type="PANTHER" id="PTHR31727:SF2">
    <property type="entry name" value="PALMITOYL-ACYL CARRIER PROTEIN THIOESTERASE, CHLOROPLASTIC"/>
    <property type="match status" value="1"/>
</dbReference>
<dbReference type="Pfam" id="PF01643">
    <property type="entry name" value="Acyl-ACP_TE"/>
    <property type="match status" value="1"/>
</dbReference>
<dbReference type="Pfam" id="PF20791">
    <property type="entry name" value="Acyl-ACP_TE_C"/>
    <property type="match status" value="1"/>
</dbReference>
<dbReference type="Pfam" id="PF12590">
    <property type="entry name" value="Acyl-thio_N"/>
    <property type="match status" value="1"/>
</dbReference>
<dbReference type="SUPFAM" id="SSF54637">
    <property type="entry name" value="Thioesterase/thiol ester dehydrase-isomerase"/>
    <property type="match status" value="2"/>
</dbReference>
<feature type="transit peptide" description="Chloroplast" evidence="1">
    <location>
        <begin position="1"/>
        <end position="57"/>
    </location>
</feature>
<feature type="chain" id="PRO_0000000594" description="Palmitoyl-acyl carrier protein thioesterase, chloroplastic">
    <location>
        <begin position="58"/>
        <end position="413"/>
    </location>
</feature>
<feature type="region of interest" description="Disordered" evidence="2">
    <location>
        <begin position="12"/>
        <end position="79"/>
    </location>
</feature>
<feature type="region of interest" description="Disordered" evidence="2">
    <location>
        <begin position="394"/>
        <end position="413"/>
    </location>
</feature>
<feature type="compositionally biased region" description="Low complexity" evidence="2">
    <location>
        <begin position="29"/>
        <end position="40"/>
    </location>
</feature>
<feature type="active site" evidence="1">
    <location>
        <position position="310"/>
    </location>
</feature>
<feature type="active site" evidence="1">
    <location>
        <position position="312"/>
    </location>
</feature>
<feature type="active site" evidence="1">
    <location>
        <position position="347"/>
    </location>
</feature>
<reference key="1">
    <citation type="journal article" date="1999" name="Biochim. Biophys. Acta">
        <title>Molecular cloning and nucleotide sequence of a gene encoding a cotton palmitoyl-acyl carrier protein thioesterase.</title>
        <authorList>
            <person name="Yoder D.W."/>
            <person name="Nampaisansuk M."/>
            <person name="Pirtle I.L."/>
            <person name="Chapman K.D."/>
            <person name="Pirtle R.M."/>
        </authorList>
    </citation>
    <scope>NUCLEOTIDE SEQUENCE [GENOMIC DNA]</scope>
    <source>
        <strain>cv. Acala SJ5</strain>
    </source>
</reference>
<reference key="2">
    <citation type="journal article" date="1999" name="Plant Cell Physiol.">
        <title>Characterization of a palmitoyl-acyl carrier protein thioesterase (FatB1) in cotton.</title>
        <authorList>
            <person name="Pirtle R.M."/>
            <person name="Yoder D.W."/>
            <person name="Huynh T.T."/>
            <person name="Nampaisansuk M."/>
            <person name="Pirtle I.L."/>
            <person name="Chapman K.D."/>
        </authorList>
    </citation>
    <scope>NUCLEOTIDE SEQUENCE [MRNA] OF 4-413</scope>
    <scope>CHARACTERIZATION</scope>
    <source>
        <strain>cv. Deltapine 62</strain>
    </source>
</reference>
<accession>Q9SQI3</accession>
<accession>Q9ZTT9</accession>
<gene>
    <name type="primary">FATB1</name>
</gene>
<protein>
    <recommendedName>
        <fullName>Palmitoyl-acyl carrier protein thioesterase, chloroplastic</fullName>
        <ecNumber>3.1.2.-</ecNumber>
    </recommendedName>
    <alternativeName>
        <fullName>16:0-acyl-carrier protein thioesterase</fullName>
        <shortName>16:0-ACP thioesterase</shortName>
    </alternativeName>
    <alternativeName>
        <fullName>Acyl-[acyl-carrier-protein] hydrolase</fullName>
    </alternativeName>
    <alternativeName>
        <fullName>PATE</fullName>
    </alternativeName>
</protein>
<evidence type="ECO:0000255" key="1"/>
<evidence type="ECO:0000256" key="2">
    <source>
        <dbReference type="SAM" id="MobiDB-lite"/>
    </source>
</evidence>
<evidence type="ECO:0000305" key="3"/>
<organism>
    <name type="scientific">Gossypium hirsutum</name>
    <name type="common">Upland cotton</name>
    <name type="synonym">Gossypium mexicanum</name>
    <dbReference type="NCBI Taxonomy" id="3635"/>
    <lineage>
        <taxon>Eukaryota</taxon>
        <taxon>Viridiplantae</taxon>
        <taxon>Streptophyta</taxon>
        <taxon>Embryophyta</taxon>
        <taxon>Tracheophyta</taxon>
        <taxon>Spermatophyta</taxon>
        <taxon>Magnoliopsida</taxon>
        <taxon>eudicotyledons</taxon>
        <taxon>Gunneridae</taxon>
        <taxon>Pentapetalae</taxon>
        <taxon>rosids</taxon>
        <taxon>malvids</taxon>
        <taxon>Malvales</taxon>
        <taxon>Malvaceae</taxon>
        <taxon>Malvoideae</taxon>
        <taxon>Gossypium</taxon>
    </lineage>
</organism>
<proteinExistence type="evidence at protein level"/>